<proteinExistence type="inferred from homology"/>
<reference key="1">
    <citation type="submission" date="2008-01" db="EMBL/GenBank/DDBJ databases">
        <title>Complete sequence of Pseudomonas putida GB-1.</title>
        <authorList>
            <consortium name="US DOE Joint Genome Institute"/>
            <person name="Copeland A."/>
            <person name="Lucas S."/>
            <person name="Lapidus A."/>
            <person name="Barry K."/>
            <person name="Glavina del Rio T."/>
            <person name="Dalin E."/>
            <person name="Tice H."/>
            <person name="Pitluck S."/>
            <person name="Bruce D."/>
            <person name="Goodwin L."/>
            <person name="Chertkov O."/>
            <person name="Brettin T."/>
            <person name="Detter J.C."/>
            <person name="Han C."/>
            <person name="Kuske C.R."/>
            <person name="Schmutz J."/>
            <person name="Larimer F."/>
            <person name="Land M."/>
            <person name="Hauser L."/>
            <person name="Kyrpides N."/>
            <person name="Kim E."/>
            <person name="McCarthy J.K."/>
            <person name="Richardson P."/>
        </authorList>
    </citation>
    <scope>NUCLEOTIDE SEQUENCE [LARGE SCALE GENOMIC DNA]</scope>
    <source>
        <strain>GB-1</strain>
    </source>
</reference>
<accession>B0KHQ8</accession>
<organism>
    <name type="scientific">Pseudomonas putida (strain GB-1)</name>
    <dbReference type="NCBI Taxonomy" id="76869"/>
    <lineage>
        <taxon>Bacteria</taxon>
        <taxon>Pseudomonadati</taxon>
        <taxon>Pseudomonadota</taxon>
        <taxon>Gammaproteobacteria</taxon>
        <taxon>Pseudomonadales</taxon>
        <taxon>Pseudomonadaceae</taxon>
        <taxon>Pseudomonas</taxon>
    </lineage>
</organism>
<gene>
    <name evidence="1" type="primary">rlmG</name>
    <name type="ordered locus">PputGB1_4642</name>
</gene>
<dbReference type="EC" id="2.1.1.174" evidence="1"/>
<dbReference type="EMBL" id="CP000926">
    <property type="protein sequence ID" value="ABZ00529.1"/>
    <property type="molecule type" value="Genomic_DNA"/>
</dbReference>
<dbReference type="RefSeq" id="WP_012274179.1">
    <property type="nucleotide sequence ID" value="NC_010322.1"/>
</dbReference>
<dbReference type="SMR" id="B0KHQ8"/>
<dbReference type="KEGG" id="ppg:PputGB1_4642"/>
<dbReference type="eggNOG" id="COG2813">
    <property type="taxonomic scope" value="Bacteria"/>
</dbReference>
<dbReference type="HOGENOM" id="CLU_040288_4_0_6"/>
<dbReference type="Proteomes" id="UP000002157">
    <property type="component" value="Chromosome"/>
</dbReference>
<dbReference type="GO" id="GO:0005737">
    <property type="term" value="C:cytoplasm"/>
    <property type="evidence" value="ECO:0007669"/>
    <property type="project" value="UniProtKB-SubCell"/>
</dbReference>
<dbReference type="GO" id="GO:0052916">
    <property type="term" value="F:23S rRNA (guanine(1835)-N(2))-methyltransferase activity"/>
    <property type="evidence" value="ECO:0007669"/>
    <property type="project" value="UniProtKB-EC"/>
</dbReference>
<dbReference type="GO" id="GO:0003676">
    <property type="term" value="F:nucleic acid binding"/>
    <property type="evidence" value="ECO:0007669"/>
    <property type="project" value="InterPro"/>
</dbReference>
<dbReference type="CDD" id="cd02440">
    <property type="entry name" value="AdoMet_MTases"/>
    <property type="match status" value="1"/>
</dbReference>
<dbReference type="Gene3D" id="3.40.50.150">
    <property type="entry name" value="Vaccinia Virus protein VP39"/>
    <property type="match status" value="2"/>
</dbReference>
<dbReference type="HAMAP" id="MF_01859">
    <property type="entry name" value="23SrRNA_methyltr_G"/>
    <property type="match status" value="1"/>
</dbReference>
<dbReference type="InterPro" id="IPR002052">
    <property type="entry name" value="DNA_methylase_N6_adenine_CS"/>
</dbReference>
<dbReference type="InterPro" id="IPR017237">
    <property type="entry name" value="rRNA_m2G-MeTrfase_RlmG"/>
</dbReference>
<dbReference type="InterPro" id="IPR046977">
    <property type="entry name" value="RsmC/RlmG"/>
</dbReference>
<dbReference type="InterPro" id="IPR029063">
    <property type="entry name" value="SAM-dependent_MTases_sf"/>
</dbReference>
<dbReference type="InterPro" id="IPR007848">
    <property type="entry name" value="Small_mtfrase_dom"/>
</dbReference>
<dbReference type="PANTHER" id="PTHR47816:SF5">
    <property type="entry name" value="RIBOSOMAL RNA LARGE SUBUNIT METHYLTRANSFERASE G"/>
    <property type="match status" value="1"/>
</dbReference>
<dbReference type="PANTHER" id="PTHR47816">
    <property type="entry name" value="RIBOSOMAL RNA SMALL SUBUNIT METHYLTRANSFERASE C"/>
    <property type="match status" value="1"/>
</dbReference>
<dbReference type="Pfam" id="PF05175">
    <property type="entry name" value="MTS"/>
    <property type="match status" value="1"/>
</dbReference>
<dbReference type="PIRSF" id="PIRSF037565">
    <property type="entry name" value="RRNA_m2G_Mtase_RsmD_prd"/>
    <property type="match status" value="1"/>
</dbReference>
<dbReference type="SUPFAM" id="SSF53335">
    <property type="entry name" value="S-adenosyl-L-methionine-dependent methyltransferases"/>
    <property type="match status" value="1"/>
</dbReference>
<feature type="chain" id="PRO_0000366480" description="Ribosomal RNA large subunit methyltransferase G">
    <location>
        <begin position="1"/>
        <end position="374"/>
    </location>
</feature>
<name>RLMG_PSEPG</name>
<evidence type="ECO:0000255" key="1">
    <source>
        <dbReference type="HAMAP-Rule" id="MF_01859"/>
    </source>
</evidence>
<comment type="function">
    <text evidence="1">Specifically methylates the guanine in position 1835 (m2G1835) of 23S rRNA.</text>
</comment>
<comment type="catalytic activity">
    <reaction evidence="1">
        <text>guanosine(1835) in 23S rRNA + S-adenosyl-L-methionine = N(2)-methylguanosine(1835) in 23S rRNA + S-adenosyl-L-homocysteine + H(+)</text>
        <dbReference type="Rhea" id="RHEA:42744"/>
        <dbReference type="Rhea" id="RHEA-COMP:10217"/>
        <dbReference type="Rhea" id="RHEA-COMP:10218"/>
        <dbReference type="ChEBI" id="CHEBI:15378"/>
        <dbReference type="ChEBI" id="CHEBI:57856"/>
        <dbReference type="ChEBI" id="CHEBI:59789"/>
        <dbReference type="ChEBI" id="CHEBI:74269"/>
        <dbReference type="ChEBI" id="CHEBI:74481"/>
        <dbReference type="EC" id="2.1.1.174"/>
    </reaction>
</comment>
<comment type="subcellular location">
    <subcellularLocation>
        <location evidence="1">Cytoplasm</location>
    </subcellularLocation>
</comment>
<comment type="similarity">
    <text evidence="1">Belongs to the methyltransferase superfamily. RlmG family.</text>
</comment>
<sequence length="374" mass="40626">MPLLTTPYAELDLIRQPEQANDPLQAFDAADEYLLAQLHEQAPDANCRVLVLNDSFGALAVSLAGRLQVVSSGDSHLAHLGLEKNLTRNGLTFDSVPFVPASEHWQGLFDRVLVRVPKTLALLEEQLIRLQGHLAPGAQVIAGAMIKHLPRAAGDLMEKYIGPVQASLAQKKARLLTATVAERPLARSPYPSRYHLDAPALELVNHANVFCREGLDIGTRAFLPHLPRDLGNARVADLGCGNGVLAIASALGNPDAEYTLVDESYMAVQSAQENWRAALGERAANFVAADGLAGVEKQSLDVVLCNPPFHQQQVVGDFLAWRMFQQAREALVVGGALYIVGNRHLGYHSKLARLFRGVEQVAATPKFVILKARK</sequence>
<protein>
    <recommendedName>
        <fullName evidence="1">Ribosomal RNA large subunit methyltransferase G</fullName>
        <ecNumber evidence="1">2.1.1.174</ecNumber>
    </recommendedName>
    <alternativeName>
        <fullName evidence="1">23S rRNA m2G1835 methyltransferase</fullName>
    </alternativeName>
    <alternativeName>
        <fullName evidence="1">rRNA (guanine-N(2)-)-methyltransferase RlmG</fullName>
    </alternativeName>
</protein>
<keyword id="KW-0963">Cytoplasm</keyword>
<keyword id="KW-0489">Methyltransferase</keyword>
<keyword id="KW-0698">rRNA processing</keyword>
<keyword id="KW-0949">S-adenosyl-L-methionine</keyword>
<keyword id="KW-0808">Transferase</keyword>